<gene>
    <name type="primary">scy1</name>
    <name type="synonym">ntkl</name>
    <name type="ORF">DDB_G0267540</name>
</gene>
<feature type="chain" id="PRO_0000327440" description="Probable inactive serine/threonine-protein kinase scy1">
    <location>
        <begin position="1"/>
        <end position="813"/>
    </location>
</feature>
<feature type="domain" description="Protein kinase" evidence="1">
    <location>
        <begin position="1"/>
        <end position="264"/>
    </location>
</feature>
<feature type="repeat" description="HEAT 1">
    <location>
        <begin position="340"/>
        <end position="378"/>
    </location>
</feature>
<feature type="repeat" description="HEAT 2">
    <location>
        <begin position="380"/>
        <end position="416"/>
    </location>
</feature>
<feature type="repeat" description="HEAT 3">
    <location>
        <begin position="417"/>
        <end position="454"/>
    </location>
</feature>
<feature type="repeat" description="HEAT 4">
    <location>
        <begin position="456"/>
        <end position="493"/>
    </location>
</feature>
<feature type="repeat" description="HEAT 5">
    <location>
        <begin position="494"/>
        <end position="532"/>
    </location>
</feature>
<feature type="region of interest" description="Disordered" evidence="2">
    <location>
        <begin position="539"/>
        <end position="566"/>
    </location>
</feature>
<feature type="region of interest" description="Disordered" evidence="2">
    <location>
        <begin position="583"/>
        <end position="790"/>
    </location>
</feature>
<feature type="compositionally biased region" description="Polar residues" evidence="2">
    <location>
        <begin position="548"/>
        <end position="566"/>
    </location>
</feature>
<feature type="compositionally biased region" description="Low complexity" evidence="2">
    <location>
        <begin position="583"/>
        <end position="606"/>
    </location>
</feature>
<feature type="compositionally biased region" description="Low complexity" evidence="2">
    <location>
        <begin position="614"/>
        <end position="637"/>
    </location>
</feature>
<feature type="compositionally biased region" description="Polar residues" evidence="2">
    <location>
        <begin position="664"/>
        <end position="674"/>
    </location>
</feature>
<feature type="compositionally biased region" description="Acidic residues" evidence="2">
    <location>
        <begin position="681"/>
        <end position="695"/>
    </location>
</feature>
<feature type="compositionally biased region" description="Basic and acidic residues" evidence="2">
    <location>
        <begin position="696"/>
        <end position="705"/>
    </location>
</feature>
<feature type="compositionally biased region" description="Low complexity" evidence="2">
    <location>
        <begin position="712"/>
        <end position="722"/>
    </location>
</feature>
<feature type="compositionally biased region" description="Low complexity" evidence="2">
    <location>
        <begin position="748"/>
        <end position="768"/>
    </location>
</feature>
<reference key="1">
    <citation type="journal article" date="2005" name="Nature">
        <title>The genome of the social amoeba Dictyostelium discoideum.</title>
        <authorList>
            <person name="Eichinger L."/>
            <person name="Pachebat J.A."/>
            <person name="Gloeckner G."/>
            <person name="Rajandream M.A."/>
            <person name="Sucgang R."/>
            <person name="Berriman M."/>
            <person name="Song J."/>
            <person name="Olsen R."/>
            <person name="Szafranski K."/>
            <person name="Xu Q."/>
            <person name="Tunggal B."/>
            <person name="Kummerfeld S."/>
            <person name="Madera M."/>
            <person name="Konfortov B.A."/>
            <person name="Rivero F."/>
            <person name="Bankier A.T."/>
            <person name="Lehmann R."/>
            <person name="Hamlin N."/>
            <person name="Davies R."/>
            <person name="Gaudet P."/>
            <person name="Fey P."/>
            <person name="Pilcher K."/>
            <person name="Chen G."/>
            <person name="Saunders D."/>
            <person name="Sodergren E.J."/>
            <person name="Davis P."/>
            <person name="Kerhornou A."/>
            <person name="Nie X."/>
            <person name="Hall N."/>
            <person name="Anjard C."/>
            <person name="Hemphill L."/>
            <person name="Bason N."/>
            <person name="Farbrother P."/>
            <person name="Desany B."/>
            <person name="Just E."/>
            <person name="Morio T."/>
            <person name="Rost R."/>
            <person name="Churcher C.M."/>
            <person name="Cooper J."/>
            <person name="Haydock S."/>
            <person name="van Driessche N."/>
            <person name="Cronin A."/>
            <person name="Goodhead I."/>
            <person name="Muzny D.M."/>
            <person name="Mourier T."/>
            <person name="Pain A."/>
            <person name="Lu M."/>
            <person name="Harper D."/>
            <person name="Lindsay R."/>
            <person name="Hauser H."/>
            <person name="James K.D."/>
            <person name="Quiles M."/>
            <person name="Madan Babu M."/>
            <person name="Saito T."/>
            <person name="Buchrieser C."/>
            <person name="Wardroper A."/>
            <person name="Felder M."/>
            <person name="Thangavelu M."/>
            <person name="Johnson D."/>
            <person name="Knights A."/>
            <person name="Loulseged H."/>
            <person name="Mungall K.L."/>
            <person name="Oliver K."/>
            <person name="Price C."/>
            <person name="Quail M.A."/>
            <person name="Urushihara H."/>
            <person name="Hernandez J."/>
            <person name="Rabbinowitsch E."/>
            <person name="Steffen D."/>
            <person name="Sanders M."/>
            <person name="Ma J."/>
            <person name="Kohara Y."/>
            <person name="Sharp S."/>
            <person name="Simmonds M.N."/>
            <person name="Spiegler S."/>
            <person name="Tivey A."/>
            <person name="Sugano S."/>
            <person name="White B."/>
            <person name="Walker D."/>
            <person name="Woodward J.R."/>
            <person name="Winckler T."/>
            <person name="Tanaka Y."/>
            <person name="Shaulsky G."/>
            <person name="Schleicher M."/>
            <person name="Weinstock G.M."/>
            <person name="Rosenthal A."/>
            <person name="Cox E.C."/>
            <person name="Chisholm R.L."/>
            <person name="Gibbs R.A."/>
            <person name="Loomis W.F."/>
            <person name="Platzer M."/>
            <person name="Kay R.R."/>
            <person name="Williams J.G."/>
            <person name="Dear P.H."/>
            <person name="Noegel A.A."/>
            <person name="Barrell B.G."/>
            <person name="Kuspa A."/>
        </authorList>
    </citation>
    <scope>NUCLEOTIDE SEQUENCE [LARGE SCALE GENOMIC DNA]</scope>
    <source>
        <strain>AX4</strain>
    </source>
</reference>
<reference key="2">
    <citation type="journal article" date="2004" name="Int. Rev. Cytol.">
        <title>Molecular and functional analysis of the dictyostelium centrosome.</title>
        <authorList>
            <person name="Graef R."/>
            <person name="Daunderer C."/>
            <person name="Schulz I."/>
        </authorList>
    </citation>
    <scope>IDENTIFICATION</scope>
</reference>
<dbReference type="EMBL" id="AAFI02000003">
    <property type="protein sequence ID" value="EAL73223.1"/>
    <property type="molecule type" value="Genomic_DNA"/>
</dbReference>
<dbReference type="RefSeq" id="XP_647112.1">
    <property type="nucleotide sequence ID" value="XM_642020.1"/>
</dbReference>
<dbReference type="SMR" id="Q55GS2"/>
<dbReference type="FunCoup" id="Q55GS2">
    <property type="interactions" value="920"/>
</dbReference>
<dbReference type="STRING" id="44689.Q55GS2"/>
<dbReference type="PaxDb" id="44689-DDB0220502"/>
<dbReference type="EnsemblProtists" id="EAL73223">
    <property type="protein sequence ID" value="EAL73223"/>
    <property type="gene ID" value="DDB_G0267540"/>
</dbReference>
<dbReference type="GeneID" id="8615916"/>
<dbReference type="KEGG" id="ddi:DDB_G0267540"/>
<dbReference type="dictyBase" id="DDB_G0267540">
    <property type="gene designation" value="scy1"/>
</dbReference>
<dbReference type="VEuPathDB" id="AmoebaDB:DDB_G0267540"/>
<dbReference type="eggNOG" id="KOG1243">
    <property type="taxonomic scope" value="Eukaryota"/>
</dbReference>
<dbReference type="HOGENOM" id="CLU_010392_1_0_1"/>
<dbReference type="InParanoid" id="Q55GS2"/>
<dbReference type="OMA" id="EFVVSWG"/>
<dbReference type="PhylomeDB" id="Q55GS2"/>
<dbReference type="PRO" id="PR:Q55GS2"/>
<dbReference type="Proteomes" id="UP000002195">
    <property type="component" value="Chromosome 1"/>
</dbReference>
<dbReference type="GO" id="GO:0005813">
    <property type="term" value="C:centrosome"/>
    <property type="evidence" value="ECO:0000304"/>
    <property type="project" value="dictyBase"/>
</dbReference>
<dbReference type="GO" id="GO:0005524">
    <property type="term" value="F:ATP binding"/>
    <property type="evidence" value="ECO:0007669"/>
    <property type="project" value="InterPro"/>
</dbReference>
<dbReference type="GO" id="GO:0004672">
    <property type="term" value="F:protein kinase activity"/>
    <property type="evidence" value="ECO:0007669"/>
    <property type="project" value="InterPro"/>
</dbReference>
<dbReference type="Gene3D" id="1.25.10.10">
    <property type="entry name" value="Leucine-rich Repeat Variant"/>
    <property type="match status" value="1"/>
</dbReference>
<dbReference type="Gene3D" id="3.30.200.20">
    <property type="entry name" value="Phosphorylase Kinase, domain 1"/>
    <property type="match status" value="1"/>
</dbReference>
<dbReference type="Gene3D" id="1.10.510.10">
    <property type="entry name" value="Transferase(Phosphotransferase) domain 1"/>
    <property type="match status" value="1"/>
</dbReference>
<dbReference type="InterPro" id="IPR011989">
    <property type="entry name" value="ARM-like"/>
</dbReference>
<dbReference type="InterPro" id="IPR016024">
    <property type="entry name" value="ARM-type_fold"/>
</dbReference>
<dbReference type="InterPro" id="IPR051177">
    <property type="entry name" value="CIK-Related_Protein"/>
</dbReference>
<dbReference type="InterPro" id="IPR011009">
    <property type="entry name" value="Kinase-like_dom_sf"/>
</dbReference>
<dbReference type="InterPro" id="IPR000719">
    <property type="entry name" value="Prot_kinase_dom"/>
</dbReference>
<dbReference type="PANTHER" id="PTHR12984:SF3">
    <property type="entry name" value="N-TERMINAL KINASE-LIKE PROTEIN"/>
    <property type="match status" value="1"/>
</dbReference>
<dbReference type="PANTHER" id="PTHR12984">
    <property type="entry name" value="SCY1-RELATED S/T PROTEIN KINASE-LIKE"/>
    <property type="match status" value="1"/>
</dbReference>
<dbReference type="Pfam" id="PF00069">
    <property type="entry name" value="Pkinase"/>
    <property type="match status" value="1"/>
</dbReference>
<dbReference type="SMART" id="SM00220">
    <property type="entry name" value="S_TKc"/>
    <property type="match status" value="1"/>
</dbReference>
<dbReference type="SUPFAM" id="SSF48371">
    <property type="entry name" value="ARM repeat"/>
    <property type="match status" value="1"/>
</dbReference>
<dbReference type="SUPFAM" id="SSF56112">
    <property type="entry name" value="Protein kinase-like (PK-like)"/>
    <property type="match status" value="1"/>
</dbReference>
<dbReference type="PROSITE" id="PS50011">
    <property type="entry name" value="PROTEIN_KINASE_DOM"/>
    <property type="match status" value="1"/>
</dbReference>
<evidence type="ECO:0000255" key="1">
    <source>
        <dbReference type="PROSITE-ProRule" id="PRU00159"/>
    </source>
</evidence>
<evidence type="ECO:0000256" key="2">
    <source>
        <dbReference type="SAM" id="MobiDB-lite"/>
    </source>
</evidence>
<sequence>MYIFKLMGQNLTASQSFPYNIGPIVTGYVGKSIWTLHSGTKKEDGSAVSIFSFDIKKNPSKLEVAKNGFKRAKTTRHPNVLKYLDGLETETNIYIVTEPIQLLDELLEDIRNFENAISWGLYQEGLSFLNNKCNLTHGNIQSSSIFVNKGGDWQIGGLDFVSDVKDINNSILRNHNDLIPNKYKSPEIMKSQWQQIQQSPSYSIDSWMLGCLMYECYNGTMTKAEDIKNLDQIPKQLHQAYQKSFAVKTESRLNPQKFLESPYFQNVFVETLVFLENITLKDTFEKEQFFKKLDQHIEKIPINICKFKILPHLVTAFDLGPVNPRLLSTLLKIGSNLSTEEYNSRIVPSVVKWFACDDRALRINLLENLEHYIQHLNEATINDQIFPHVVNGFNDNPTLKELTIKSMLLFAPKLQEKTMIILLKYFAALQKDQQAGVRCNTTICLGRITEYMNEATKKRVLIPAFSTALKDPFVPSQNAAIQAFMFTISNYSLEELATRVIPEVSRMLISPEKSIRTSAFTAINMFLQKIEKNVDSILPSSPQQQQQNGSTLNTNPNDPNQNSQDSMLGWAVGITKKLYSGENSPITATNNNNNTNTPPINQNNNNGYKSPPINQNNNQNNNQNNNQNNNQNNNQNNKSLQNKQPTKVIHDGWGDNDYQEPPKKQTTTNTPSKSSKYKVEDNDDDDDDDEDYQEEDYSKYKEDLPRLTPKPSSTSSSSSSTSNKLDNKPMSLVSKNKPKYSFDEEDTSSSSSNIVNKNNNNKNNNSDGWGDDDGWGNDEIQVPSTTTSNIKKTVEKKTIVTASKSDGWDDGWD</sequence>
<organism>
    <name type="scientific">Dictyostelium discoideum</name>
    <name type="common">Social amoeba</name>
    <dbReference type="NCBI Taxonomy" id="44689"/>
    <lineage>
        <taxon>Eukaryota</taxon>
        <taxon>Amoebozoa</taxon>
        <taxon>Evosea</taxon>
        <taxon>Eumycetozoa</taxon>
        <taxon>Dictyostelia</taxon>
        <taxon>Dictyosteliales</taxon>
        <taxon>Dictyosteliaceae</taxon>
        <taxon>Dictyostelium</taxon>
    </lineage>
</organism>
<proteinExistence type="inferred from homology"/>
<keyword id="KW-1185">Reference proteome</keyword>
<keyword id="KW-0677">Repeat</keyword>
<protein>
    <recommendedName>
        <fullName>Probable inactive serine/threonine-protein kinase scy1</fullName>
    </recommendedName>
    <alternativeName>
        <fullName>N-terminal kinase-like protein</fullName>
    </alternativeName>
    <alternativeName>
        <fullName>SCY1-like protein kinase 1</fullName>
    </alternativeName>
</protein>
<comment type="domain">
    <text>The protein kinase domain is predicted to be catalytically inactive.</text>
</comment>
<comment type="similarity">
    <text evidence="1">Belongs to the protein kinase superfamily. Ser/Thr protein kinase family.</text>
</comment>
<name>SCY1_DICDI</name>
<accession>Q55GS2</accession>